<dbReference type="EMBL" id="CP000829">
    <property type="protein sequence ID" value="ACI62033.1"/>
    <property type="molecule type" value="Genomic_DNA"/>
</dbReference>
<dbReference type="SMR" id="B5XJ99"/>
<dbReference type="KEGG" id="soz:Spy49_1786c"/>
<dbReference type="HOGENOM" id="CLU_092403_0_1_9"/>
<dbReference type="Proteomes" id="UP000001039">
    <property type="component" value="Chromosome"/>
</dbReference>
<dbReference type="GO" id="GO:0015935">
    <property type="term" value="C:small ribosomal subunit"/>
    <property type="evidence" value="ECO:0007669"/>
    <property type="project" value="InterPro"/>
</dbReference>
<dbReference type="GO" id="GO:0019843">
    <property type="term" value="F:rRNA binding"/>
    <property type="evidence" value="ECO:0007669"/>
    <property type="project" value="UniProtKB-UniRule"/>
</dbReference>
<dbReference type="GO" id="GO:0003735">
    <property type="term" value="F:structural constituent of ribosome"/>
    <property type="evidence" value="ECO:0007669"/>
    <property type="project" value="InterPro"/>
</dbReference>
<dbReference type="GO" id="GO:0042274">
    <property type="term" value="P:ribosomal small subunit biogenesis"/>
    <property type="evidence" value="ECO:0007669"/>
    <property type="project" value="TreeGrafter"/>
</dbReference>
<dbReference type="GO" id="GO:0006412">
    <property type="term" value="P:translation"/>
    <property type="evidence" value="ECO:0007669"/>
    <property type="project" value="UniProtKB-UniRule"/>
</dbReference>
<dbReference type="CDD" id="cd00165">
    <property type="entry name" value="S4"/>
    <property type="match status" value="1"/>
</dbReference>
<dbReference type="FunFam" id="3.10.290.10:FF:000001">
    <property type="entry name" value="30S ribosomal protein S4"/>
    <property type="match status" value="1"/>
</dbReference>
<dbReference type="Gene3D" id="1.10.1050.10">
    <property type="entry name" value="Ribosomal Protein S4 Delta 41, Chain A, domain 1"/>
    <property type="match status" value="1"/>
</dbReference>
<dbReference type="Gene3D" id="3.10.290.10">
    <property type="entry name" value="RNA-binding S4 domain"/>
    <property type="match status" value="1"/>
</dbReference>
<dbReference type="HAMAP" id="MF_01306_B">
    <property type="entry name" value="Ribosomal_uS4_B"/>
    <property type="match status" value="1"/>
</dbReference>
<dbReference type="InterPro" id="IPR022801">
    <property type="entry name" value="Ribosomal_uS4"/>
</dbReference>
<dbReference type="InterPro" id="IPR005709">
    <property type="entry name" value="Ribosomal_uS4_bac-type"/>
</dbReference>
<dbReference type="InterPro" id="IPR018079">
    <property type="entry name" value="Ribosomal_uS4_CS"/>
</dbReference>
<dbReference type="InterPro" id="IPR001912">
    <property type="entry name" value="Ribosomal_uS4_N"/>
</dbReference>
<dbReference type="InterPro" id="IPR002942">
    <property type="entry name" value="S4_RNA-bd"/>
</dbReference>
<dbReference type="InterPro" id="IPR036986">
    <property type="entry name" value="S4_RNA-bd_sf"/>
</dbReference>
<dbReference type="NCBIfam" id="NF003717">
    <property type="entry name" value="PRK05327.1"/>
    <property type="match status" value="1"/>
</dbReference>
<dbReference type="NCBIfam" id="TIGR01017">
    <property type="entry name" value="rpsD_bact"/>
    <property type="match status" value="1"/>
</dbReference>
<dbReference type="PANTHER" id="PTHR11831">
    <property type="entry name" value="30S 40S RIBOSOMAL PROTEIN"/>
    <property type="match status" value="1"/>
</dbReference>
<dbReference type="PANTHER" id="PTHR11831:SF4">
    <property type="entry name" value="SMALL RIBOSOMAL SUBUNIT PROTEIN US4M"/>
    <property type="match status" value="1"/>
</dbReference>
<dbReference type="Pfam" id="PF00163">
    <property type="entry name" value="Ribosomal_S4"/>
    <property type="match status" value="1"/>
</dbReference>
<dbReference type="Pfam" id="PF01479">
    <property type="entry name" value="S4"/>
    <property type="match status" value="1"/>
</dbReference>
<dbReference type="SMART" id="SM01390">
    <property type="entry name" value="Ribosomal_S4"/>
    <property type="match status" value="1"/>
</dbReference>
<dbReference type="SMART" id="SM00363">
    <property type="entry name" value="S4"/>
    <property type="match status" value="1"/>
</dbReference>
<dbReference type="SUPFAM" id="SSF55174">
    <property type="entry name" value="Alpha-L RNA-binding motif"/>
    <property type="match status" value="1"/>
</dbReference>
<dbReference type="PROSITE" id="PS00632">
    <property type="entry name" value="RIBOSOMAL_S4"/>
    <property type="match status" value="1"/>
</dbReference>
<dbReference type="PROSITE" id="PS50889">
    <property type="entry name" value="S4"/>
    <property type="match status" value="1"/>
</dbReference>
<protein>
    <recommendedName>
        <fullName evidence="1">Small ribosomal subunit protein uS4</fullName>
    </recommendedName>
    <alternativeName>
        <fullName evidence="2">30S ribosomal protein S4</fullName>
    </alternativeName>
</protein>
<proteinExistence type="inferred from homology"/>
<accession>B5XJ99</accession>
<name>RS4_STRPZ</name>
<organism>
    <name type="scientific">Streptococcus pyogenes serotype M49 (strain NZ131)</name>
    <dbReference type="NCBI Taxonomy" id="471876"/>
    <lineage>
        <taxon>Bacteria</taxon>
        <taxon>Bacillati</taxon>
        <taxon>Bacillota</taxon>
        <taxon>Bacilli</taxon>
        <taxon>Lactobacillales</taxon>
        <taxon>Streptococcaceae</taxon>
        <taxon>Streptococcus</taxon>
    </lineage>
</organism>
<comment type="function">
    <text evidence="1">One of the primary rRNA binding proteins, it binds directly to 16S rRNA where it nucleates assembly of the body of the 30S subunit.</text>
</comment>
<comment type="function">
    <text evidence="1">With S5 and S12 plays an important role in translational accuracy.</text>
</comment>
<comment type="subunit">
    <text evidence="1">Part of the 30S ribosomal subunit. Contacts protein S5. The interaction surface between S4 and S5 is involved in control of translational fidelity.</text>
</comment>
<comment type="similarity">
    <text evidence="1">Belongs to the universal ribosomal protein uS4 family.</text>
</comment>
<gene>
    <name evidence="1" type="primary">rpsD</name>
    <name type="ordered locus">Spy49_1786c</name>
</gene>
<reference key="1">
    <citation type="journal article" date="2008" name="J. Bacteriol.">
        <title>Genome sequence of a nephritogenic and highly transformable M49 strain of Streptococcus pyogenes.</title>
        <authorList>
            <person name="McShan W.M."/>
            <person name="Ferretti J.J."/>
            <person name="Karasawa T."/>
            <person name="Suvorov A.N."/>
            <person name="Lin S."/>
            <person name="Qin B."/>
            <person name="Jia H."/>
            <person name="Kenton S."/>
            <person name="Najar F."/>
            <person name="Wu H."/>
            <person name="Scott J."/>
            <person name="Roe B.A."/>
            <person name="Savic D.J."/>
        </authorList>
    </citation>
    <scope>NUCLEOTIDE SEQUENCE [LARGE SCALE GENOMIC DNA]</scope>
    <source>
        <strain>NZ131</strain>
    </source>
</reference>
<keyword id="KW-0687">Ribonucleoprotein</keyword>
<keyword id="KW-0689">Ribosomal protein</keyword>
<keyword id="KW-0694">RNA-binding</keyword>
<keyword id="KW-0699">rRNA-binding</keyword>
<evidence type="ECO:0000255" key="1">
    <source>
        <dbReference type="HAMAP-Rule" id="MF_01306"/>
    </source>
</evidence>
<evidence type="ECO:0000305" key="2"/>
<sequence length="203" mass="23074">MSRYTGPSWKQSRRLGLSLTGTGKELARRNYVPGQHGPNNRSKLSEYGLQLAEKQKLRFSYGLGEKQFRNLVVQATKIKEGTLGFNFMVLLERRLDNVVYRLGLATTRRQARQFVNHGHILVDGKRVDIPSYRVDPGQVISVREKSMKVPAILEAVEATLGRPAFVSFDAEKLKGSLTRLPERDEINPEINEALVVEFYNKML</sequence>
<feature type="chain" id="PRO_1000140802" description="Small ribosomal subunit protein uS4">
    <location>
        <begin position="1"/>
        <end position="203"/>
    </location>
</feature>
<feature type="domain" description="S4 RNA-binding" evidence="1">
    <location>
        <begin position="93"/>
        <end position="156"/>
    </location>
</feature>